<feature type="chain" id="PRO_1000186090" description="tRNA 2-selenouridine synthase">
    <location>
        <begin position="1"/>
        <end position="368"/>
    </location>
</feature>
<feature type="domain" description="Rhodanese" evidence="1">
    <location>
        <begin position="15"/>
        <end position="138"/>
    </location>
</feature>
<feature type="active site" description="S-selanylcysteine intermediate" evidence="1">
    <location>
        <position position="98"/>
    </location>
</feature>
<evidence type="ECO:0000255" key="1">
    <source>
        <dbReference type="HAMAP-Rule" id="MF_01622"/>
    </source>
</evidence>
<dbReference type="EC" id="2.9.1.3" evidence="1"/>
<dbReference type="EMBL" id="CP000961">
    <property type="protein sequence ID" value="ACA88964.1"/>
    <property type="molecule type" value="Genomic_DNA"/>
</dbReference>
<dbReference type="RefSeq" id="WP_012327282.1">
    <property type="nucleotide sequence ID" value="NC_010506.1"/>
</dbReference>
<dbReference type="SMR" id="B1KN07"/>
<dbReference type="STRING" id="392500.Swoo_4714"/>
<dbReference type="KEGG" id="swd:Swoo_4714"/>
<dbReference type="eggNOG" id="COG2603">
    <property type="taxonomic scope" value="Bacteria"/>
</dbReference>
<dbReference type="HOGENOM" id="CLU_043456_1_0_6"/>
<dbReference type="Proteomes" id="UP000002168">
    <property type="component" value="Chromosome"/>
</dbReference>
<dbReference type="GO" id="GO:0016765">
    <property type="term" value="F:transferase activity, transferring alkyl or aryl (other than methyl) groups"/>
    <property type="evidence" value="ECO:0007669"/>
    <property type="project" value="UniProtKB-UniRule"/>
</dbReference>
<dbReference type="GO" id="GO:0043828">
    <property type="term" value="F:tRNA 2-selenouridine synthase activity"/>
    <property type="evidence" value="ECO:0007669"/>
    <property type="project" value="UniProtKB-EC"/>
</dbReference>
<dbReference type="GO" id="GO:0002098">
    <property type="term" value="P:tRNA wobble uridine modification"/>
    <property type="evidence" value="ECO:0007669"/>
    <property type="project" value="UniProtKB-UniRule"/>
</dbReference>
<dbReference type="Gene3D" id="3.40.250.10">
    <property type="entry name" value="Rhodanese-like domain"/>
    <property type="match status" value="1"/>
</dbReference>
<dbReference type="HAMAP" id="MF_01622">
    <property type="entry name" value="tRNA_sel_U_synth"/>
    <property type="match status" value="1"/>
</dbReference>
<dbReference type="InterPro" id="IPR001763">
    <property type="entry name" value="Rhodanese-like_dom"/>
</dbReference>
<dbReference type="InterPro" id="IPR036873">
    <property type="entry name" value="Rhodanese-like_dom_sf"/>
</dbReference>
<dbReference type="InterPro" id="IPR017582">
    <property type="entry name" value="SelU"/>
</dbReference>
<dbReference type="NCBIfam" id="NF008750">
    <property type="entry name" value="PRK11784.1-2"/>
    <property type="match status" value="1"/>
</dbReference>
<dbReference type="NCBIfam" id="NF008751">
    <property type="entry name" value="PRK11784.1-3"/>
    <property type="match status" value="1"/>
</dbReference>
<dbReference type="NCBIfam" id="TIGR03167">
    <property type="entry name" value="tRNA_sel_U_synt"/>
    <property type="match status" value="1"/>
</dbReference>
<dbReference type="PANTHER" id="PTHR30401">
    <property type="entry name" value="TRNA 2-SELENOURIDINE SYNTHASE"/>
    <property type="match status" value="1"/>
</dbReference>
<dbReference type="PANTHER" id="PTHR30401:SF0">
    <property type="entry name" value="TRNA 2-SELENOURIDINE SYNTHASE"/>
    <property type="match status" value="1"/>
</dbReference>
<dbReference type="SMART" id="SM00450">
    <property type="entry name" value="RHOD"/>
    <property type="match status" value="1"/>
</dbReference>
<dbReference type="SUPFAM" id="SSF52821">
    <property type="entry name" value="Rhodanese/Cell cycle control phosphatase"/>
    <property type="match status" value="1"/>
</dbReference>
<dbReference type="PROSITE" id="PS50206">
    <property type="entry name" value="RHODANESE_3"/>
    <property type="match status" value="1"/>
</dbReference>
<gene>
    <name evidence="1" type="primary">selU</name>
    <name type="ordered locus">Swoo_4714</name>
</gene>
<comment type="function">
    <text evidence="1">Involved in the post-transcriptional modification of the uridine at the wobble position (U34) of tRNA(Lys), tRNA(Glu) and tRNA(Gln). Catalyzes the conversion of 2-thiouridine (S2U-RNA) to 2-selenouridine (Se2U-RNA). Acts in a two-step process involving geranylation of 2-thiouridine (S2U) to S-geranyl-2-thiouridine (geS2U) and subsequent selenation of the latter derivative to 2-selenouridine (Se2U) in the tRNA chain.</text>
</comment>
<comment type="catalytic activity">
    <reaction evidence="1">
        <text>5-methylaminomethyl-2-thiouridine(34) in tRNA + selenophosphate + (2E)-geranyl diphosphate + H2O + H(+) = 5-methylaminomethyl-2-selenouridine(34) in tRNA + (2E)-thiogeraniol + phosphate + diphosphate</text>
        <dbReference type="Rhea" id="RHEA:42716"/>
        <dbReference type="Rhea" id="RHEA-COMP:10195"/>
        <dbReference type="Rhea" id="RHEA-COMP:10196"/>
        <dbReference type="ChEBI" id="CHEBI:15377"/>
        <dbReference type="ChEBI" id="CHEBI:15378"/>
        <dbReference type="ChEBI" id="CHEBI:16144"/>
        <dbReference type="ChEBI" id="CHEBI:33019"/>
        <dbReference type="ChEBI" id="CHEBI:43474"/>
        <dbReference type="ChEBI" id="CHEBI:58057"/>
        <dbReference type="ChEBI" id="CHEBI:74455"/>
        <dbReference type="ChEBI" id="CHEBI:82743"/>
        <dbReference type="ChEBI" id="CHEBI:143703"/>
        <dbReference type="EC" id="2.9.1.3"/>
    </reaction>
    <physiologicalReaction direction="left-to-right" evidence="1">
        <dbReference type="Rhea" id="RHEA:42717"/>
    </physiologicalReaction>
</comment>
<comment type="catalytic activity">
    <reaction evidence="1">
        <text>5-methylaminomethyl-2-thiouridine(34) in tRNA + (2E)-geranyl diphosphate = 5-methylaminomethyl-S-(2E)-geranyl-thiouridine(34) in tRNA + diphosphate</text>
        <dbReference type="Rhea" id="RHEA:14085"/>
        <dbReference type="Rhea" id="RHEA-COMP:10195"/>
        <dbReference type="Rhea" id="RHEA-COMP:14654"/>
        <dbReference type="ChEBI" id="CHEBI:33019"/>
        <dbReference type="ChEBI" id="CHEBI:58057"/>
        <dbReference type="ChEBI" id="CHEBI:74455"/>
        <dbReference type="ChEBI" id="CHEBI:140632"/>
    </reaction>
    <physiologicalReaction direction="left-to-right" evidence="1">
        <dbReference type="Rhea" id="RHEA:14086"/>
    </physiologicalReaction>
</comment>
<comment type="catalytic activity">
    <reaction evidence="1">
        <text>5-methylaminomethyl-S-(2E)-geranyl-thiouridine(34) in tRNA + selenophosphate + H(+) = 5-methylaminomethyl-2-(Se-phospho)selenouridine(34) in tRNA + (2E)-thiogeraniol</text>
        <dbReference type="Rhea" id="RHEA:60172"/>
        <dbReference type="Rhea" id="RHEA-COMP:14654"/>
        <dbReference type="Rhea" id="RHEA-COMP:15523"/>
        <dbReference type="ChEBI" id="CHEBI:15378"/>
        <dbReference type="ChEBI" id="CHEBI:16144"/>
        <dbReference type="ChEBI" id="CHEBI:140632"/>
        <dbReference type="ChEBI" id="CHEBI:143702"/>
        <dbReference type="ChEBI" id="CHEBI:143703"/>
    </reaction>
    <physiologicalReaction direction="left-to-right" evidence="1">
        <dbReference type="Rhea" id="RHEA:60173"/>
    </physiologicalReaction>
</comment>
<comment type="catalytic activity">
    <reaction evidence="1">
        <text>5-methylaminomethyl-2-(Se-phospho)selenouridine(34) in tRNA + H2O = 5-methylaminomethyl-2-selenouridine(34) in tRNA + phosphate</text>
        <dbReference type="Rhea" id="RHEA:60176"/>
        <dbReference type="Rhea" id="RHEA-COMP:10196"/>
        <dbReference type="Rhea" id="RHEA-COMP:15523"/>
        <dbReference type="ChEBI" id="CHEBI:15377"/>
        <dbReference type="ChEBI" id="CHEBI:43474"/>
        <dbReference type="ChEBI" id="CHEBI:82743"/>
        <dbReference type="ChEBI" id="CHEBI:143702"/>
    </reaction>
    <physiologicalReaction direction="left-to-right" evidence="1">
        <dbReference type="Rhea" id="RHEA:60177"/>
    </physiologicalReaction>
</comment>
<comment type="subunit">
    <text evidence="1">Monomer.</text>
</comment>
<comment type="similarity">
    <text evidence="1">Belongs to the SelU family.</text>
</comment>
<sequence>MSRNIIPKTTYQEIMLSGHPMIDVRAPIEFDKGAFPSSSNFPLMQDSERQRVGTCYKEQGQDAAIALGHSLVNGKVKQQRVDAWLAFIKQHPDAYLYCFRGGLRSQLSQQWIKEAGVDIPYVEGGYKAMRQYLIEVIDNAPAKQPVFILSGITGSGKTDFLLQRSEAVDLEGYAHHRGSSFGRYHEGQPTQINFENQLAVALLKHQERKEQCLLVEDESFLIGRSAIPKAFYEGMQNADILVLEEPEETRLTRLLNEYVHKMHSGYVERLGEEAGFTAFSEYLSQSITSIKKRLGSQLHDEFQTIISKALNMQLQQNDTQGHLEWISLLLTRYYDPMYQYQLEQKQERVIFKGSHQAMHEWLDHYRNR</sequence>
<protein>
    <recommendedName>
        <fullName evidence="1">tRNA 2-selenouridine synthase</fullName>
        <ecNumber evidence="1">2.9.1.3</ecNumber>
    </recommendedName>
</protein>
<accession>B1KN07</accession>
<proteinExistence type="inferred from homology"/>
<reference key="1">
    <citation type="submission" date="2008-02" db="EMBL/GenBank/DDBJ databases">
        <title>Complete sequence of Shewanella woodyi ATCC 51908.</title>
        <authorList>
            <consortium name="US DOE Joint Genome Institute"/>
            <person name="Copeland A."/>
            <person name="Lucas S."/>
            <person name="Lapidus A."/>
            <person name="Glavina del Rio T."/>
            <person name="Dalin E."/>
            <person name="Tice H."/>
            <person name="Bruce D."/>
            <person name="Goodwin L."/>
            <person name="Pitluck S."/>
            <person name="Sims D."/>
            <person name="Brettin T."/>
            <person name="Detter J.C."/>
            <person name="Han C."/>
            <person name="Kuske C.R."/>
            <person name="Schmutz J."/>
            <person name="Larimer F."/>
            <person name="Land M."/>
            <person name="Hauser L."/>
            <person name="Kyrpides N."/>
            <person name="Lykidis A."/>
            <person name="Zhao J.-S."/>
            <person name="Richardson P."/>
        </authorList>
    </citation>
    <scope>NUCLEOTIDE SEQUENCE [LARGE SCALE GENOMIC DNA]</scope>
    <source>
        <strain>ATCC 51908 / MS32</strain>
    </source>
</reference>
<name>SELU_SHEWM</name>
<organism>
    <name type="scientific">Shewanella woodyi (strain ATCC 51908 / MS32)</name>
    <dbReference type="NCBI Taxonomy" id="392500"/>
    <lineage>
        <taxon>Bacteria</taxon>
        <taxon>Pseudomonadati</taxon>
        <taxon>Pseudomonadota</taxon>
        <taxon>Gammaproteobacteria</taxon>
        <taxon>Alteromonadales</taxon>
        <taxon>Shewanellaceae</taxon>
        <taxon>Shewanella</taxon>
    </lineage>
</organism>
<keyword id="KW-1185">Reference proteome</keyword>
<keyword id="KW-0711">Selenium</keyword>
<keyword id="KW-0808">Transferase</keyword>